<accession>C5B6Z1</accession>
<reference key="1">
    <citation type="submission" date="2009-03" db="EMBL/GenBank/DDBJ databases">
        <title>Complete genome sequence of Edwardsiella ictaluri 93-146.</title>
        <authorList>
            <person name="Williams M.L."/>
            <person name="Gillaspy A.F."/>
            <person name="Dyer D.W."/>
            <person name="Thune R.L."/>
            <person name="Waldbieser G.C."/>
            <person name="Schuster S.C."/>
            <person name="Gipson J."/>
            <person name="Zaitshik J."/>
            <person name="Landry C."/>
            <person name="Lawrence M.L."/>
        </authorList>
    </citation>
    <scope>NUCLEOTIDE SEQUENCE [LARGE SCALE GENOMIC DNA]</scope>
    <source>
        <strain>93-146</strain>
    </source>
</reference>
<dbReference type="EC" id="5.3.1.9" evidence="1"/>
<dbReference type="EMBL" id="CP001600">
    <property type="protein sequence ID" value="ACR67453.1"/>
    <property type="molecule type" value="Genomic_DNA"/>
</dbReference>
<dbReference type="RefSeq" id="WP_015869663.1">
    <property type="nucleotide sequence ID" value="NZ_CP169062.1"/>
</dbReference>
<dbReference type="SMR" id="C5B6Z1"/>
<dbReference type="STRING" id="67780.B6E78_12190"/>
<dbReference type="GeneID" id="69537314"/>
<dbReference type="KEGG" id="eic:NT01EI_0210"/>
<dbReference type="PATRIC" id="fig|634503.3.peg.186"/>
<dbReference type="HOGENOM" id="CLU_017947_3_1_6"/>
<dbReference type="OrthoDB" id="140919at2"/>
<dbReference type="UniPathway" id="UPA00109">
    <property type="reaction ID" value="UER00181"/>
</dbReference>
<dbReference type="UniPathway" id="UPA00138"/>
<dbReference type="Proteomes" id="UP000001485">
    <property type="component" value="Chromosome"/>
</dbReference>
<dbReference type="GO" id="GO:0005829">
    <property type="term" value="C:cytosol"/>
    <property type="evidence" value="ECO:0007669"/>
    <property type="project" value="TreeGrafter"/>
</dbReference>
<dbReference type="GO" id="GO:0097367">
    <property type="term" value="F:carbohydrate derivative binding"/>
    <property type="evidence" value="ECO:0007669"/>
    <property type="project" value="InterPro"/>
</dbReference>
<dbReference type="GO" id="GO:0004347">
    <property type="term" value="F:glucose-6-phosphate isomerase activity"/>
    <property type="evidence" value="ECO:0007669"/>
    <property type="project" value="UniProtKB-UniRule"/>
</dbReference>
<dbReference type="GO" id="GO:0048029">
    <property type="term" value="F:monosaccharide binding"/>
    <property type="evidence" value="ECO:0007669"/>
    <property type="project" value="TreeGrafter"/>
</dbReference>
<dbReference type="GO" id="GO:0006094">
    <property type="term" value="P:gluconeogenesis"/>
    <property type="evidence" value="ECO:0007669"/>
    <property type="project" value="UniProtKB-UniRule"/>
</dbReference>
<dbReference type="GO" id="GO:0051156">
    <property type="term" value="P:glucose 6-phosphate metabolic process"/>
    <property type="evidence" value="ECO:0007669"/>
    <property type="project" value="TreeGrafter"/>
</dbReference>
<dbReference type="GO" id="GO:0006096">
    <property type="term" value="P:glycolytic process"/>
    <property type="evidence" value="ECO:0007669"/>
    <property type="project" value="UniProtKB-UniRule"/>
</dbReference>
<dbReference type="CDD" id="cd05015">
    <property type="entry name" value="SIS_PGI_1"/>
    <property type="match status" value="1"/>
</dbReference>
<dbReference type="CDD" id="cd05016">
    <property type="entry name" value="SIS_PGI_2"/>
    <property type="match status" value="1"/>
</dbReference>
<dbReference type="FunFam" id="1.10.1390.10:FF:000001">
    <property type="entry name" value="Glucose-6-phosphate isomerase"/>
    <property type="match status" value="1"/>
</dbReference>
<dbReference type="FunFam" id="3.40.50.10490:FF:000004">
    <property type="entry name" value="Glucose-6-phosphate isomerase"/>
    <property type="match status" value="1"/>
</dbReference>
<dbReference type="Gene3D" id="1.10.1390.10">
    <property type="match status" value="1"/>
</dbReference>
<dbReference type="Gene3D" id="3.40.50.10490">
    <property type="entry name" value="Glucose-6-phosphate isomerase like protein, domain 1"/>
    <property type="match status" value="2"/>
</dbReference>
<dbReference type="HAMAP" id="MF_00473">
    <property type="entry name" value="G6P_isomerase"/>
    <property type="match status" value="1"/>
</dbReference>
<dbReference type="InterPro" id="IPR001672">
    <property type="entry name" value="G6P_Isomerase"/>
</dbReference>
<dbReference type="InterPro" id="IPR023096">
    <property type="entry name" value="G6P_Isomerase_C"/>
</dbReference>
<dbReference type="InterPro" id="IPR018189">
    <property type="entry name" value="Phosphoglucose_isomerase_CS"/>
</dbReference>
<dbReference type="InterPro" id="IPR046348">
    <property type="entry name" value="SIS_dom_sf"/>
</dbReference>
<dbReference type="InterPro" id="IPR035476">
    <property type="entry name" value="SIS_PGI_1"/>
</dbReference>
<dbReference type="InterPro" id="IPR035482">
    <property type="entry name" value="SIS_PGI_2"/>
</dbReference>
<dbReference type="NCBIfam" id="NF001211">
    <property type="entry name" value="PRK00179.1"/>
    <property type="match status" value="1"/>
</dbReference>
<dbReference type="PANTHER" id="PTHR11469">
    <property type="entry name" value="GLUCOSE-6-PHOSPHATE ISOMERASE"/>
    <property type="match status" value="1"/>
</dbReference>
<dbReference type="PANTHER" id="PTHR11469:SF1">
    <property type="entry name" value="GLUCOSE-6-PHOSPHATE ISOMERASE"/>
    <property type="match status" value="1"/>
</dbReference>
<dbReference type="Pfam" id="PF00342">
    <property type="entry name" value="PGI"/>
    <property type="match status" value="1"/>
</dbReference>
<dbReference type="PRINTS" id="PR00662">
    <property type="entry name" value="G6PISOMERASE"/>
</dbReference>
<dbReference type="SUPFAM" id="SSF53697">
    <property type="entry name" value="SIS domain"/>
    <property type="match status" value="1"/>
</dbReference>
<dbReference type="PROSITE" id="PS00765">
    <property type="entry name" value="P_GLUCOSE_ISOMERASE_1"/>
    <property type="match status" value="1"/>
</dbReference>
<dbReference type="PROSITE" id="PS00174">
    <property type="entry name" value="P_GLUCOSE_ISOMERASE_2"/>
    <property type="match status" value="1"/>
</dbReference>
<dbReference type="PROSITE" id="PS51463">
    <property type="entry name" value="P_GLUCOSE_ISOMERASE_3"/>
    <property type="match status" value="1"/>
</dbReference>
<sequence length="549" mass="61432">MKNINPTRTAAWQALQQHFGQMKSVHMRDLFAADADRFSKFSATFDDQMLVDYSKNRINAETLEKLQALARETDLQGAIAAMFAGEKINRTEDRAVLHIALRNRSNTPICVDGKDVMPEVNAVLAKMKQFCVRVIDGEWRGYTGKAITDVVNIGIGGSDLGPYMVTEALRPYKNHLTMHFVSNVDGTHIAETLQRLNPETTLFLVASKTFTTQETMTNAHSARDWFLQAAGDERHVARHFAALSTNVQAVAAFGIDTANMFEFWDWVGGRYSLWSAIGLSIALSIGYDNFEQLLAGAHAMDRHFASAPLPQNLPVLLALIGIWYNNFFGAETEAILPYDQYMHRFPAYFQQGNMESNGKYVDRDGQVVDYQTGPIIWGEPGTNGQHAFYQLIHQGTKLIPCDFIAPAISHNPLGDHHGKLLSNFFAQTEALAFGKSREAVEEEFAKAGKSAAEVQHIVPFKVFEGNRPTNSILLREITPYSLGMLIALYEHKIFTQGVILNIFSFDQWGVELGKQLANRILPELEDAQPVRSHDSSTNALINRFKAWRA</sequence>
<name>G6PI_EDWI9</name>
<keyword id="KW-0963">Cytoplasm</keyword>
<keyword id="KW-0312">Gluconeogenesis</keyword>
<keyword id="KW-0324">Glycolysis</keyword>
<keyword id="KW-0413">Isomerase</keyword>
<gene>
    <name evidence="1" type="primary">pgi</name>
    <name type="ordered locus">NT01EI_0210</name>
</gene>
<evidence type="ECO:0000255" key="1">
    <source>
        <dbReference type="HAMAP-Rule" id="MF_00473"/>
    </source>
</evidence>
<organism>
    <name type="scientific">Edwardsiella ictaluri (strain 93-146)</name>
    <dbReference type="NCBI Taxonomy" id="634503"/>
    <lineage>
        <taxon>Bacteria</taxon>
        <taxon>Pseudomonadati</taxon>
        <taxon>Pseudomonadota</taxon>
        <taxon>Gammaproteobacteria</taxon>
        <taxon>Enterobacterales</taxon>
        <taxon>Hafniaceae</taxon>
        <taxon>Edwardsiella</taxon>
    </lineage>
</organism>
<feature type="chain" id="PRO_1000206365" description="Glucose-6-phosphate isomerase">
    <location>
        <begin position="1"/>
        <end position="549"/>
    </location>
</feature>
<feature type="active site" description="Proton donor" evidence="1">
    <location>
        <position position="355"/>
    </location>
</feature>
<feature type="active site" evidence="1">
    <location>
        <position position="386"/>
    </location>
</feature>
<feature type="active site" evidence="1">
    <location>
        <position position="514"/>
    </location>
</feature>
<proteinExistence type="inferred from homology"/>
<comment type="function">
    <text evidence="1">Catalyzes the reversible isomerization of glucose-6-phosphate to fructose-6-phosphate.</text>
</comment>
<comment type="catalytic activity">
    <reaction evidence="1">
        <text>alpha-D-glucose 6-phosphate = beta-D-fructose 6-phosphate</text>
        <dbReference type="Rhea" id="RHEA:11816"/>
        <dbReference type="ChEBI" id="CHEBI:57634"/>
        <dbReference type="ChEBI" id="CHEBI:58225"/>
        <dbReference type="EC" id="5.3.1.9"/>
    </reaction>
</comment>
<comment type="pathway">
    <text evidence="1">Carbohydrate biosynthesis; gluconeogenesis.</text>
</comment>
<comment type="pathway">
    <text evidence="1">Carbohydrate degradation; glycolysis; D-glyceraldehyde 3-phosphate and glycerone phosphate from D-glucose: step 2/4.</text>
</comment>
<comment type="subcellular location">
    <subcellularLocation>
        <location evidence="1">Cytoplasm</location>
    </subcellularLocation>
</comment>
<comment type="similarity">
    <text evidence="1">Belongs to the GPI family.</text>
</comment>
<protein>
    <recommendedName>
        <fullName evidence="1">Glucose-6-phosphate isomerase</fullName>
        <shortName evidence="1">GPI</shortName>
        <ecNumber evidence="1">5.3.1.9</ecNumber>
    </recommendedName>
    <alternativeName>
        <fullName evidence="1">Phosphoglucose isomerase</fullName>
        <shortName evidence="1">PGI</shortName>
    </alternativeName>
    <alternativeName>
        <fullName evidence="1">Phosphohexose isomerase</fullName>
        <shortName evidence="1">PHI</shortName>
    </alternativeName>
</protein>